<gene>
    <name type="primary">TICAM1</name>
    <name type="synonym">TRIF</name>
</gene>
<feature type="chain" id="PRO_0000317662" description="TIR domain-containing adapter molecule 1">
    <location>
        <begin position="1"/>
        <end position="759"/>
    </location>
</feature>
<feature type="domain" description="TIR" evidence="3">
    <location>
        <begin position="430"/>
        <end position="590"/>
    </location>
</feature>
<feature type="region of interest" description="TRIF-NTD" evidence="2">
    <location>
        <begin position="1"/>
        <end position="153"/>
    </location>
</feature>
<feature type="region of interest" description="Disordered" evidence="4">
    <location>
        <begin position="241"/>
        <end position="296"/>
    </location>
</feature>
<feature type="region of interest" description="Disordered" evidence="4">
    <location>
        <begin position="340"/>
        <end position="426"/>
    </location>
</feature>
<feature type="region of interest" description="Sufficient to induce apoptosis" evidence="2">
    <location>
        <begin position="549"/>
        <end position="759"/>
    </location>
</feature>
<feature type="region of interest" description="Disordered" evidence="4">
    <location>
        <begin position="642"/>
        <end position="723"/>
    </location>
</feature>
<feature type="short sequence motif" description="TRAF6-binding" evidence="2">
    <location>
        <begin position="84"/>
        <end position="91"/>
    </location>
</feature>
<feature type="short sequence motif" description="pLxIS motif" evidence="2">
    <location>
        <begin position="207"/>
        <end position="210"/>
    </location>
</feature>
<feature type="short sequence motif" description="TRAF6-binding" evidence="2">
    <location>
        <begin position="248"/>
        <end position="255"/>
    </location>
</feature>
<feature type="short sequence motif" description="TRAF6-binding" evidence="2">
    <location>
        <begin position="299"/>
        <end position="309"/>
    </location>
</feature>
<feature type="compositionally biased region" description="Low complexity" evidence="4">
    <location>
        <begin position="351"/>
        <end position="365"/>
    </location>
</feature>
<feature type="compositionally biased region" description="Pro residues" evidence="4">
    <location>
        <begin position="366"/>
        <end position="376"/>
    </location>
</feature>
<feature type="compositionally biased region" description="Pro residues" evidence="4">
    <location>
        <begin position="659"/>
        <end position="705"/>
    </location>
</feature>
<feature type="modified residue" description="Phosphoserine" evidence="2">
    <location>
        <position position="210"/>
    </location>
</feature>
<feature type="cross-link" description="Glycyl lysine isopeptide (Lys-Gly) (interchain with G-Cter in ubiquitin)" evidence="1">
    <location>
        <position position="229"/>
    </location>
</feature>
<feature type="sequence conflict" description="In Ref. 1; CAI53671." evidence="5" ref="1">
    <original>T</original>
    <variation>P</variation>
    <location>
        <position position="4"/>
    </location>
</feature>
<feature type="sequence conflict" description="In Ref. 2; AAI51623." evidence="5" ref="2">
    <original>A</original>
    <variation>T</variation>
    <location>
        <position position="285"/>
    </location>
</feature>
<feature type="sequence conflict" description="In Ref. 2; AAI51623." evidence="5" ref="2">
    <original>H</original>
    <variation>Q</variation>
    <location>
        <position position="288"/>
    </location>
</feature>
<feature type="sequence conflict" description="In Ref. 2; AAI51623." evidence="5" ref="2">
    <original>P</original>
    <variation>L</variation>
    <location>
        <position position="294"/>
    </location>
</feature>
<feature type="sequence conflict" description="In Ref. 2; AAI51623." evidence="5" ref="2">
    <original>T</original>
    <variation>A</variation>
    <location>
        <position position="321"/>
    </location>
</feature>
<feature type="sequence conflict" description="In Ref. 1; CAI53671." evidence="5" ref="1">
    <original>S</original>
    <variation>F</variation>
    <location>
        <position position="407"/>
    </location>
</feature>
<feature type="sequence conflict" description="In Ref. 2; AAI51623." evidence="5" ref="2">
    <original>Q</original>
    <variation>K</variation>
    <location>
        <position position="589"/>
    </location>
</feature>
<feature type="sequence conflict" description="In Ref. 2; AAI51623." evidence="5" ref="2">
    <original>S</original>
    <variation>P</variation>
    <location>
        <position position="652"/>
    </location>
</feature>
<feature type="sequence conflict" description="In Ref. 2; AAI51623." evidence="5" ref="2">
    <original>Q</original>
    <variation>P</variation>
    <location>
        <position position="681"/>
    </location>
</feature>
<protein>
    <recommendedName>
        <fullName>TIR domain-containing adapter molecule 1</fullName>
        <shortName>TICAM-1</shortName>
    </recommendedName>
    <alternativeName>
        <fullName>Toll-interleukin-1 receptor domain-containing adapter protein inducing interferon beta</fullName>
        <shortName>TIR domain-containing adapter protein inducing IFN-beta</shortName>
    </alternativeName>
</protein>
<sequence length="759" mass="82359">MACTGPSLSGAFDILGAAGQDKLLYLKHKLKTLRPGCRGAYLLHAMVLLKLGQETEARISLEALKADAVAQLVARQWAGVDSTETPEEPPDLSWAVARVYHLLTEEKLCPATMREEAYRAALRAFRSRDDLQLGELQEEARDRCGWDVLGDLGGVQTLRSDLGCLPPSSASLSRTRSDPRPIEHLSGWSTACSLRSTGSPASLGSNLEISQSPTMALLSVHHSHHGPSKLCDHPQASVVPEPAPMGCQEPEEMSWPPSVEAADSPVRPSSPGPGLPEVTTDACPASPHDPPEVPEISAHYPVECTDVPAAPKSLPSPSKNTCLVTDQTPVQLSEEDTAYLSAQPRPPTPSVPQTSPSFPSASTSPFPSPSTPPEAHPTPSKAHPTPPKAHSTPPKAHPTSPKAHPTSPKAHPTVWNPEPPPPELESSEQKFYNFVVLHASADEHIALRVRERLEALGVHDGATFCEDFQVPGRGELHCLQDALDHSAFIILLLTSNFDCRLSQHQTNQSLMSSLTRHGWQDCVIPFLPLESSLAQLSPSTSSLLTGLVLLDEHSKIFARKVTNTFKPQMLRARKAKWRKEQDARALREQSQQLESERQHAAAWGAAYSAYVHSYLAYQTQVEKLQVALANYMPFGTQLPFGGQGSLGTPPSSFPTLPGHQPPPLPPWLGGTPPPIFPQPPQTFPQPPPTFPQPPPTFQQPPPACPQPLDFSQAPPARPQSPGLQPLIIHHAQMVQLGVNNHMWNQRGTQAPEDNTRETE</sequence>
<dbReference type="EMBL" id="AJ879588">
    <property type="protein sequence ID" value="CAI53671.1"/>
    <property type="molecule type" value="mRNA"/>
</dbReference>
<dbReference type="EMBL" id="BC151622">
    <property type="protein sequence ID" value="AAI51623.1"/>
    <property type="molecule type" value="mRNA"/>
</dbReference>
<dbReference type="RefSeq" id="NP_001025472.1">
    <property type="nucleotide sequence ID" value="NM_001030301.1"/>
</dbReference>
<dbReference type="SMR" id="Q4JF29"/>
<dbReference type="FunCoup" id="Q4JF29">
    <property type="interactions" value="472"/>
</dbReference>
<dbReference type="PaxDb" id="9913-ENSBTAP00000026593"/>
<dbReference type="GeneID" id="510427"/>
<dbReference type="KEGG" id="bta:510427"/>
<dbReference type="CTD" id="148022"/>
<dbReference type="eggNOG" id="ENOG502RXF3">
    <property type="taxonomic scope" value="Eukaryota"/>
</dbReference>
<dbReference type="InParanoid" id="Q4JF29"/>
<dbReference type="OrthoDB" id="9906976at2759"/>
<dbReference type="Proteomes" id="UP000009136">
    <property type="component" value="Unplaced"/>
</dbReference>
<dbReference type="GO" id="GO:0005776">
    <property type="term" value="C:autophagosome"/>
    <property type="evidence" value="ECO:0007669"/>
    <property type="project" value="UniProtKB-SubCell"/>
</dbReference>
<dbReference type="GO" id="GO:0005829">
    <property type="term" value="C:cytosol"/>
    <property type="evidence" value="ECO:0000250"/>
    <property type="project" value="UniProtKB"/>
</dbReference>
<dbReference type="GO" id="GO:0005768">
    <property type="term" value="C:endosome"/>
    <property type="evidence" value="ECO:0000318"/>
    <property type="project" value="GO_Central"/>
</dbReference>
<dbReference type="GO" id="GO:0005739">
    <property type="term" value="C:mitochondrion"/>
    <property type="evidence" value="ECO:0000250"/>
    <property type="project" value="UniProtKB"/>
</dbReference>
<dbReference type="GO" id="GO:0035591">
    <property type="term" value="F:signaling adaptor activity"/>
    <property type="evidence" value="ECO:0000318"/>
    <property type="project" value="GO_Central"/>
</dbReference>
<dbReference type="GO" id="GO:0006915">
    <property type="term" value="P:apoptotic process"/>
    <property type="evidence" value="ECO:0007669"/>
    <property type="project" value="UniProtKB-KW"/>
</dbReference>
<dbReference type="GO" id="GO:0051607">
    <property type="term" value="P:defense response to virus"/>
    <property type="evidence" value="ECO:0007669"/>
    <property type="project" value="UniProtKB-KW"/>
</dbReference>
<dbReference type="GO" id="GO:0006954">
    <property type="term" value="P:inflammatory response"/>
    <property type="evidence" value="ECO:0007669"/>
    <property type="project" value="UniProtKB-KW"/>
</dbReference>
<dbReference type="GO" id="GO:0045087">
    <property type="term" value="P:innate immune response"/>
    <property type="evidence" value="ECO:0007669"/>
    <property type="project" value="UniProtKB-KW"/>
</dbReference>
<dbReference type="GO" id="GO:0043123">
    <property type="term" value="P:positive regulation of canonical NF-kappaB signal transduction"/>
    <property type="evidence" value="ECO:0000250"/>
    <property type="project" value="UniProtKB"/>
</dbReference>
<dbReference type="GO" id="GO:0002735">
    <property type="term" value="P:positive regulation of myeloid dendritic cell cytokine production"/>
    <property type="evidence" value="ECO:0000250"/>
    <property type="project" value="UniProtKB"/>
</dbReference>
<dbReference type="GO" id="GO:0032481">
    <property type="term" value="P:positive regulation of type I interferon production"/>
    <property type="evidence" value="ECO:0000318"/>
    <property type="project" value="GO_Central"/>
</dbReference>
<dbReference type="GO" id="GO:0043330">
    <property type="term" value="P:response to exogenous dsRNA"/>
    <property type="evidence" value="ECO:0000250"/>
    <property type="project" value="UniProtKB"/>
</dbReference>
<dbReference type="GO" id="GO:0035666">
    <property type="term" value="P:TRIF-dependent toll-like receptor signaling pathway"/>
    <property type="evidence" value="ECO:0000318"/>
    <property type="project" value="GO_Central"/>
</dbReference>
<dbReference type="FunFam" id="1.25.40.780:FF:000001">
    <property type="entry name" value="TIR domain-containing adapter molecule 1"/>
    <property type="match status" value="1"/>
</dbReference>
<dbReference type="FunFam" id="3.40.50.10140:FF:000024">
    <property type="entry name" value="TIR domain-containing adapter molecule 1"/>
    <property type="match status" value="1"/>
</dbReference>
<dbReference type="Gene3D" id="1.25.40.780">
    <property type="match status" value="1"/>
</dbReference>
<dbReference type="Gene3D" id="3.40.50.10140">
    <property type="entry name" value="Toll/interleukin-1 receptor homology (TIR) domain"/>
    <property type="match status" value="1"/>
</dbReference>
<dbReference type="InterPro" id="IPR025735">
    <property type="entry name" value="RHIM"/>
</dbReference>
<dbReference type="InterPro" id="IPR046946">
    <property type="entry name" value="TCAM1/2"/>
</dbReference>
<dbReference type="InterPro" id="IPR017278">
    <property type="entry name" value="TICAM1"/>
</dbReference>
<dbReference type="InterPro" id="IPR000157">
    <property type="entry name" value="TIR_dom"/>
</dbReference>
<dbReference type="InterPro" id="IPR035897">
    <property type="entry name" value="Toll_tir_struct_dom_sf"/>
</dbReference>
<dbReference type="InterPro" id="IPR040886">
    <property type="entry name" value="TRIF_N"/>
</dbReference>
<dbReference type="PANTHER" id="PTHR47230">
    <property type="entry name" value="TIR DOMAIN-CONTAINING ADAPTER MOLECULE 1"/>
    <property type="match status" value="1"/>
</dbReference>
<dbReference type="PANTHER" id="PTHR47230:SF1">
    <property type="entry name" value="TIR DOMAIN-CONTAINING ADAPTER MOLECULE 1"/>
    <property type="match status" value="1"/>
</dbReference>
<dbReference type="Pfam" id="PF12721">
    <property type="entry name" value="RHIM"/>
    <property type="match status" value="1"/>
</dbReference>
<dbReference type="Pfam" id="PF17798">
    <property type="entry name" value="TRIF-NTD"/>
    <property type="match status" value="1"/>
</dbReference>
<dbReference type="PIRSF" id="PIRSF037744">
    <property type="entry name" value="TIR_Ticam"/>
    <property type="match status" value="1"/>
</dbReference>
<dbReference type="PRINTS" id="PR01217">
    <property type="entry name" value="PRICHEXTENSN"/>
</dbReference>
<dbReference type="PROSITE" id="PS50104">
    <property type="entry name" value="TIR"/>
    <property type="match status" value="1"/>
</dbReference>
<keyword id="KW-0051">Antiviral defense</keyword>
<keyword id="KW-0053">Apoptosis</keyword>
<keyword id="KW-0963">Cytoplasm</keyword>
<keyword id="KW-0968">Cytoplasmic vesicle</keyword>
<keyword id="KW-0391">Immunity</keyword>
<keyword id="KW-0395">Inflammatory response</keyword>
<keyword id="KW-0399">Innate immunity</keyword>
<keyword id="KW-1017">Isopeptide bond</keyword>
<keyword id="KW-0496">Mitochondrion</keyword>
<keyword id="KW-0597">Phosphoprotein</keyword>
<keyword id="KW-1185">Reference proteome</keyword>
<keyword id="KW-0832">Ubl conjugation</keyword>
<organism>
    <name type="scientific">Bos taurus</name>
    <name type="common">Bovine</name>
    <dbReference type="NCBI Taxonomy" id="9913"/>
    <lineage>
        <taxon>Eukaryota</taxon>
        <taxon>Metazoa</taxon>
        <taxon>Chordata</taxon>
        <taxon>Craniata</taxon>
        <taxon>Vertebrata</taxon>
        <taxon>Euteleostomi</taxon>
        <taxon>Mammalia</taxon>
        <taxon>Eutheria</taxon>
        <taxon>Laurasiatheria</taxon>
        <taxon>Artiodactyla</taxon>
        <taxon>Ruminantia</taxon>
        <taxon>Pecora</taxon>
        <taxon>Bovidae</taxon>
        <taxon>Bovinae</taxon>
        <taxon>Bos</taxon>
    </lineage>
</organism>
<comment type="function">
    <text evidence="1 2">Involved in innate immunity against invading pathogens. Adapter used by TLR3, TLR4 (through TICAM2) and TLR5 to mediate NF-kappa-B and interferon-regulatory factor (IRF) activation, and to induce apoptosis. Ligand binding to these receptors results in TRIF recruitment through its TIR domain. Distinct protein-interaction motifs allow recruitment of the effector proteins TBK1, TRAF6 and RIPK1, which in turn, lead to the activation of transcription factors IRF3 and IRF7, NF-kappa-B and FADD respectively. Phosphorylation by TBK1 on the pLxIS motif leads to recruitment and subsequent activation of the transcription factor IRF3 to induce expression of type I interferon and exert a potent immunity against invading pathogens (By similarity). Component of a multi-helicase-TICAM1 complex that acts as a cytoplasmic sensor of viral double-stranded RNA (dsRNA) and plays a role in the activation of a cascade of antiviral responses including the induction of pro-inflammatory cytokines (By similarity).</text>
</comment>
<comment type="subunit">
    <text evidence="1 2">Homodimer (By similarity). Found in a multi-helicase-TICAM1 complex at least composed of DHX36, DDX1, DDX21 and TICAM1; this complex exists in resting cells with or without poly(I:C) RNA ligand stimulation. Interacts (via TIR domain) with DDX21 (via C-terminus). Interacts (via TIR domain) with DHX36 (via C-terminus) (By similarity). Interacts with AZI2 and IRF7. Interacts with TICAM2 in TLR4 recruitment. Interaction with PIAS4 inhibits the TICAM1-induced NF-kappa-B, IRF and IFNB1 activation. Interacts with IKBKB and IKBKE. Interaction with SARM1 blocks TICAM1-dependent transcription factor activation (By similarity). Interacts with TRAF3 (By similarity). Interacts (when phosphorylated) with IRF3; following activation and phosphorylation on the pLxIS motif by TBK1, recruits IRF3. Interacts with TBK1, TRAF6 and RIPK1 and these interactions are enhanced in the presence of WDFY1 (By similarity). Interacts with TRAFD1 (By similarity). Interacts with UBQLN1 (via UBA domain) (By similarity). Interacts with TLR4 in response to LPS in a WDFY1-dependent manner. Interacts with WDFY1 in response to poly(I:C) (By similarity). Interacts (via the TIR domain) with TLR3 in response to poly(I:C) and this interaction is enhanced in the presence of WDFY1. Interacts with TRIM56 (By similarity). Component of a multi-helicase-TICAM1 complex that acts as a cytoplasmic sensor of viral double-stranded RNA (dsRNA) and plays a role in the activation of a cascade of antiviral responses including the induction of pro-inflammatory cytokines (By similarity). Interacts (via the TIR domain) with TLR5 (By similarity). Interacts with TRIM8 (By similarity). Interacts with TAX1BP1 and TRIM32; these interactions target TICAM1 to TAX1BP1-mediated selective autophagic degradation (By similarity). Interacts with DDX50 (By similarity).</text>
</comment>
<comment type="subcellular location">
    <subcellularLocation>
        <location evidence="2">Cytoplasmic vesicle</location>
        <location evidence="2">Autophagosome</location>
    </subcellularLocation>
    <subcellularLocation>
        <location evidence="1">Cytoplasm</location>
        <location evidence="1">Cytosol</location>
    </subcellularLocation>
    <subcellularLocation>
        <location evidence="1">Mitochondrion</location>
    </subcellularLocation>
    <text evidence="1 2">Colocalizes with UBQLN1 in the autophagosome (By similarity). Colocalizes in the cytosol with DDX1, DDX21 and DHX36. Colocalizes in the mitochondria with DDX1 and poly(I:C) RNA ligand. The multi-helicase-TICAM1 complex may translocate to the mitochondria upon poly(I:C) RNA ligand stimulation (By similarity).</text>
</comment>
<comment type="domain">
    <text evidence="2">The pLxIS motif constitutes an IRF3-binding motif: following phosphorylation by TBK1, the phosphorylated pLxIS motif of TICAM1 recruits IRF3. IRF3 is then phosphorylated and activated by TBK1 to induce type-I interferons and other cytokines.</text>
</comment>
<comment type="domain">
    <text evidence="2">The N-terminal region is essential for activation of the IFNB promoter activity.</text>
</comment>
<comment type="domain">
    <text evidence="2">The N-terminal domain (TRIF-NTD) is globular and consists of two alpha-helical subdomains connected by a 14-residue linker. It shares structural similarity with IFIT family members N-terminal regions.</text>
</comment>
<comment type="PTM">
    <text evidence="2">Phosphorylated by TBK1. Following activation, phosphorylated by TBK1 at Ser-210 in the pLxIS motif. The phosphorylated pLxIS motif constitutes an IRF3-binding motif, leading to recruitment of the transcription factor IRF3 to induce type-I interferons and other cytokines.</text>
</comment>
<comment type="PTM">
    <text evidence="2">Polyubiquitinated at Lys-229 by TRIM38 with 'Lys-48'-linked chains, leading to proteasomal degradation. Polyubiquitinated with 'Lys-6' and 'Lys-33'-linked chains in a TRIM8-dependent manner.</text>
</comment>
<accession>Q4JF29</accession>
<accession>A7E2Y9</accession>
<evidence type="ECO:0000250" key="1">
    <source>
        <dbReference type="UniProtKB" id="Q80UF7"/>
    </source>
</evidence>
<evidence type="ECO:0000250" key="2">
    <source>
        <dbReference type="UniProtKB" id="Q8IUC6"/>
    </source>
</evidence>
<evidence type="ECO:0000255" key="3">
    <source>
        <dbReference type="PROSITE-ProRule" id="PRU00204"/>
    </source>
</evidence>
<evidence type="ECO:0000256" key="4">
    <source>
        <dbReference type="SAM" id="MobiDB-lite"/>
    </source>
</evidence>
<evidence type="ECO:0000305" key="5"/>
<proteinExistence type="evidence at transcript level"/>
<name>TCAM1_BOVIN</name>
<reference key="1">
    <citation type="submission" date="2005-02" db="EMBL/GenBank/DDBJ databases">
        <title>Dissection of MyD88 dependent and independent TLR-mediated signal transduction in mammary epithelial cells of the cow.</title>
        <authorList>
            <person name="Yang W."/>
            <person name="Seyfert H.M."/>
        </authorList>
    </citation>
    <scope>NUCLEOTIDE SEQUENCE [MRNA]</scope>
    <source>
        <tissue>Mammary gland</tissue>
    </source>
</reference>
<reference key="2">
    <citation type="submission" date="2007-08" db="EMBL/GenBank/DDBJ databases">
        <authorList>
            <consortium name="NIH - Mammalian Gene Collection (MGC) project"/>
        </authorList>
    </citation>
    <scope>NUCLEOTIDE SEQUENCE [LARGE SCALE MRNA]</scope>
    <source>
        <strain>Hereford</strain>
        <tissue>Fetal pons</tissue>
    </source>
</reference>